<comment type="subunit">
    <text evidence="1">Tetramer, composed of 2 regulatory (R) and 2 catalytic (C) subunits. In the presence of cAMP it dissociates into 2 active monomeric C subunits and an R dimer (By similarity).</text>
</comment>
<comment type="similarity">
    <text evidence="4">Belongs to the cAMP-dependent kinase regulatory chain family.</text>
</comment>
<protein>
    <recommendedName>
        <fullName>cAMP-dependent protein kinase regulatory subunit</fullName>
        <shortName>PKA regulatory subunit</shortName>
    </recommendedName>
</protein>
<name>KAPR_MUCCL</name>
<accession>Q8TF77</accession>
<reference key="1">
    <citation type="journal article" date="2002" name="FEMS Yeast Res.">
        <title>Identification and analysis of genes involved in the control of dimorphism in Mucor circinelloides (syn. racemosus).</title>
        <authorList>
            <person name="Wolff A.M."/>
            <person name="Appel K.F."/>
            <person name="Breum J."/>
            <person name="Poulsen U."/>
            <person name="Arnau J."/>
        </authorList>
    </citation>
    <scope>NUCLEOTIDE SEQUENCE [GENOMIC DNA]</scope>
    <source>
        <strain>ATCC 1216b / BCRC 32522 / CBS 277.49 / NRRL 3631</strain>
    </source>
</reference>
<gene>
    <name type="primary">pkar</name>
</gene>
<organism>
    <name type="scientific">Mucor circinelloides f. lusitanicus</name>
    <name type="common">Mucor racemosus var. lusitanicus</name>
    <dbReference type="NCBI Taxonomy" id="29924"/>
    <lineage>
        <taxon>Eukaryota</taxon>
        <taxon>Fungi</taxon>
        <taxon>Fungi incertae sedis</taxon>
        <taxon>Mucoromycota</taxon>
        <taxon>Mucoromycotina</taxon>
        <taxon>Mucoromycetes</taxon>
        <taxon>Mucorales</taxon>
        <taxon>Mucorineae</taxon>
        <taxon>Mucoraceae</taxon>
        <taxon>Mucor</taxon>
    </lineage>
</organism>
<sequence length="427" mass="48699">MITDEHPFEFAPQQDEYTQLLTELHNEYCAEQPLDVLQFCSNFFIRKLEEQRLEHRNNHHSRNNLFDTNDTSNDLHPLCEQPQEDFSQQQGIQWETTHMGHPNDHGALHDDDDDPLEDEDDEEFDKFSTEPLPSLPPTNYNRGRRTSVKCREHGTQRQPRLCQGHHPQISGTSERIKVSISNNFLFRNLDEEQYLDVVNAMSEKRVVKGTTVIEQGSVGDFFYVVESGTLDCFIGQNKVTNYEAGGSFGELALMYNAPRAATIITTSDSVLWALDRNTSAPSLMENTSRKRRMYEYFLSEVVLLKSLESYEQHKIADALESVYFEDGQEVVKQGDVGDQFYIIESGEAIVLKEENGVQQQVNQLERGSYFGELALLNDAPRAATVVAHGRLKCATLGKKAFTRLLGPVLDILKRNSENYHAVINQQS</sequence>
<feature type="chain" id="PRO_0000205413" description="cAMP-dependent protein kinase regulatory subunit">
    <location>
        <begin position="1"/>
        <end position="427"/>
    </location>
</feature>
<feature type="region of interest" description="Dimerization and phosphorylation" evidence="2">
    <location>
        <begin position="38"/>
        <end position="184"/>
    </location>
</feature>
<feature type="region of interest" description="Disordered" evidence="3">
    <location>
        <begin position="96"/>
        <end position="145"/>
    </location>
</feature>
<feature type="compositionally biased region" description="Acidic residues" evidence="3">
    <location>
        <begin position="110"/>
        <end position="124"/>
    </location>
</feature>
<feature type="binding site">
    <location>
        <begin position="185"/>
        <end position="300"/>
    </location>
    <ligand>
        <name>3',5'-cyclic AMP</name>
        <dbReference type="ChEBI" id="CHEBI:58165"/>
        <label>1</label>
    </ligand>
</feature>
<feature type="binding site" evidence="1">
    <location>
        <position position="250"/>
    </location>
    <ligand>
        <name>3',5'-cyclic AMP</name>
        <dbReference type="ChEBI" id="CHEBI:58165"/>
        <label>1</label>
    </ligand>
</feature>
<feature type="binding site" evidence="1">
    <location>
        <position position="259"/>
    </location>
    <ligand>
        <name>3',5'-cyclic AMP</name>
        <dbReference type="ChEBI" id="CHEBI:58165"/>
        <label>1</label>
    </ligand>
</feature>
<feature type="binding site">
    <location>
        <begin position="303"/>
        <end position="422"/>
    </location>
    <ligand>
        <name>3',5'-cyclic AMP</name>
        <dbReference type="ChEBI" id="CHEBI:58165"/>
        <label>2</label>
    </ligand>
</feature>
<feature type="binding site" evidence="1">
    <location>
        <position position="372"/>
    </location>
    <ligand>
        <name>3',5'-cyclic AMP</name>
        <dbReference type="ChEBI" id="CHEBI:58165"/>
        <label>2</label>
    </ligand>
</feature>
<feature type="binding site" evidence="1">
    <location>
        <position position="381"/>
    </location>
    <ligand>
        <name>3',5'-cyclic AMP</name>
        <dbReference type="ChEBI" id="CHEBI:58165"/>
        <label>2</label>
    </ligand>
</feature>
<feature type="modified residue" description="Phosphoserine" evidence="1">
    <location>
        <position position="147"/>
    </location>
</feature>
<keyword id="KW-0114">cAMP</keyword>
<keyword id="KW-0116">cAMP-binding</keyword>
<keyword id="KW-0547">Nucleotide-binding</keyword>
<keyword id="KW-0597">Phosphoprotein</keyword>
<keyword id="KW-0677">Repeat</keyword>
<evidence type="ECO:0000250" key="1"/>
<evidence type="ECO:0000255" key="2"/>
<evidence type="ECO:0000256" key="3">
    <source>
        <dbReference type="SAM" id="MobiDB-lite"/>
    </source>
</evidence>
<evidence type="ECO:0000305" key="4"/>
<proteinExistence type="inferred from homology"/>
<dbReference type="EMBL" id="AJ400723">
    <property type="protein sequence ID" value="CAC81804.1"/>
    <property type="molecule type" value="Genomic_DNA"/>
</dbReference>
<dbReference type="SMR" id="Q8TF77"/>
<dbReference type="GO" id="GO:0005952">
    <property type="term" value="C:cAMP-dependent protein kinase complex"/>
    <property type="evidence" value="ECO:0007669"/>
    <property type="project" value="InterPro"/>
</dbReference>
<dbReference type="GO" id="GO:0005829">
    <property type="term" value="C:cytosol"/>
    <property type="evidence" value="ECO:0007669"/>
    <property type="project" value="TreeGrafter"/>
</dbReference>
<dbReference type="GO" id="GO:0005634">
    <property type="term" value="C:nucleus"/>
    <property type="evidence" value="ECO:0007669"/>
    <property type="project" value="TreeGrafter"/>
</dbReference>
<dbReference type="GO" id="GO:0030552">
    <property type="term" value="F:cAMP binding"/>
    <property type="evidence" value="ECO:0007669"/>
    <property type="project" value="UniProtKB-KW"/>
</dbReference>
<dbReference type="GO" id="GO:0004862">
    <property type="term" value="F:cAMP-dependent protein kinase inhibitor activity"/>
    <property type="evidence" value="ECO:0007669"/>
    <property type="project" value="TreeGrafter"/>
</dbReference>
<dbReference type="GO" id="GO:0034236">
    <property type="term" value="F:protein kinase A catalytic subunit binding"/>
    <property type="evidence" value="ECO:0007669"/>
    <property type="project" value="TreeGrafter"/>
</dbReference>
<dbReference type="CDD" id="cd00038">
    <property type="entry name" value="CAP_ED"/>
    <property type="match status" value="2"/>
</dbReference>
<dbReference type="CDD" id="cd12098">
    <property type="entry name" value="DD_R_ScPKA-like"/>
    <property type="match status" value="1"/>
</dbReference>
<dbReference type="FunFam" id="2.60.120.10:FF:000006">
    <property type="entry name" value="cAMP-dependent protein kinase type I-alpha regulatory subunit"/>
    <property type="match status" value="1"/>
</dbReference>
<dbReference type="Gene3D" id="2.60.120.10">
    <property type="entry name" value="Jelly Rolls"/>
    <property type="match status" value="2"/>
</dbReference>
<dbReference type="InterPro" id="IPR050503">
    <property type="entry name" value="cAMP-dep_PK_reg_su-like"/>
</dbReference>
<dbReference type="InterPro" id="IPR012198">
    <property type="entry name" value="cAMP_dep_PK_reg_su"/>
</dbReference>
<dbReference type="InterPro" id="IPR003117">
    <property type="entry name" value="cAMP_dep_PK_reg_su_I/II_a/b"/>
</dbReference>
<dbReference type="InterPro" id="IPR018488">
    <property type="entry name" value="cNMP-bd_CS"/>
</dbReference>
<dbReference type="InterPro" id="IPR000595">
    <property type="entry name" value="cNMP-bd_dom"/>
</dbReference>
<dbReference type="InterPro" id="IPR018490">
    <property type="entry name" value="cNMP-bd_dom_sf"/>
</dbReference>
<dbReference type="InterPro" id="IPR014710">
    <property type="entry name" value="RmlC-like_jellyroll"/>
</dbReference>
<dbReference type="PANTHER" id="PTHR11635">
    <property type="entry name" value="CAMP-DEPENDENT PROTEIN KINASE REGULATORY CHAIN"/>
    <property type="match status" value="1"/>
</dbReference>
<dbReference type="PANTHER" id="PTHR11635:SF152">
    <property type="entry name" value="CAMP-DEPENDENT PROTEIN KINASE TYPE I REGULATORY SUBUNIT-RELATED"/>
    <property type="match status" value="1"/>
</dbReference>
<dbReference type="Pfam" id="PF00027">
    <property type="entry name" value="cNMP_binding"/>
    <property type="match status" value="2"/>
</dbReference>
<dbReference type="Pfam" id="PF02197">
    <property type="entry name" value="RIIa"/>
    <property type="match status" value="1"/>
</dbReference>
<dbReference type="PIRSF" id="PIRSF000548">
    <property type="entry name" value="PK_regulatory"/>
    <property type="match status" value="1"/>
</dbReference>
<dbReference type="PRINTS" id="PR00103">
    <property type="entry name" value="CAMPKINASE"/>
</dbReference>
<dbReference type="SMART" id="SM00100">
    <property type="entry name" value="cNMP"/>
    <property type="match status" value="2"/>
</dbReference>
<dbReference type="SMART" id="SM00394">
    <property type="entry name" value="RIIa"/>
    <property type="match status" value="1"/>
</dbReference>
<dbReference type="SUPFAM" id="SSF51206">
    <property type="entry name" value="cAMP-binding domain-like"/>
    <property type="match status" value="2"/>
</dbReference>
<dbReference type="PROSITE" id="PS00888">
    <property type="entry name" value="CNMP_BINDING_1"/>
    <property type="match status" value="1"/>
</dbReference>
<dbReference type="PROSITE" id="PS00889">
    <property type="entry name" value="CNMP_BINDING_2"/>
    <property type="match status" value="2"/>
</dbReference>
<dbReference type="PROSITE" id="PS50042">
    <property type="entry name" value="CNMP_BINDING_3"/>
    <property type="match status" value="2"/>
</dbReference>